<proteinExistence type="evidence at transcript level"/>
<protein>
    <recommendedName>
        <fullName>Ras-GEF domain-containing family member 1B-A</fullName>
    </recommendedName>
</protein>
<gene>
    <name type="primary">rasgef1ba</name>
    <name type="synonym">rasgef1b</name>
    <name type="ORF">si:dkey-18e17.1</name>
</gene>
<keyword id="KW-0025">Alternative splicing</keyword>
<keyword id="KW-0344">Guanine-nucleotide releasing factor</keyword>
<keyword id="KW-1185">Reference proteome</keyword>
<feature type="chain" id="PRO_0000297641" description="Ras-GEF domain-containing family member 1B-A">
    <location>
        <begin position="1"/>
        <end position="514"/>
    </location>
</feature>
<feature type="domain" description="N-terminal Ras-GEF" evidence="2">
    <location>
        <begin position="76"/>
        <end position="206"/>
    </location>
</feature>
<feature type="domain" description="Ras-GEF" evidence="3">
    <location>
        <begin position="246"/>
        <end position="494"/>
    </location>
</feature>
<feature type="splice variant" id="VSP_034044" description="In isoform 2." evidence="5">
    <location>
        <begin position="1"/>
        <end position="41"/>
    </location>
</feature>
<feature type="sequence conflict" description="In Ref. 2; AAH55678." evidence="6" ref="2">
    <original>E</original>
    <variation>G</variation>
    <location>
        <position position="445"/>
    </location>
</feature>
<organism>
    <name type="scientific">Danio rerio</name>
    <name type="common">Zebrafish</name>
    <name type="synonym">Brachydanio rerio</name>
    <dbReference type="NCBI Taxonomy" id="7955"/>
    <lineage>
        <taxon>Eukaryota</taxon>
        <taxon>Metazoa</taxon>
        <taxon>Chordata</taxon>
        <taxon>Craniata</taxon>
        <taxon>Vertebrata</taxon>
        <taxon>Euteleostomi</taxon>
        <taxon>Actinopterygii</taxon>
        <taxon>Neopterygii</taxon>
        <taxon>Teleostei</taxon>
        <taxon>Ostariophysi</taxon>
        <taxon>Cypriniformes</taxon>
        <taxon>Danionidae</taxon>
        <taxon>Danioninae</taxon>
        <taxon>Danio</taxon>
    </lineage>
</organism>
<comment type="function">
    <text evidence="1">Guanine nucleotide exchange factor (GEF) for Ras family proteins (in vitro).</text>
</comment>
<comment type="alternative products">
    <event type="alternative splicing"/>
    <isoform>
        <id>Q6DHR3-1</id>
        <name>1</name>
        <sequence type="displayed"/>
    </isoform>
    <isoform>
        <id>Q6DHR3-2</id>
        <name>2</name>
        <sequence type="described" ref="VSP_034044"/>
    </isoform>
</comment>
<comment type="tissue specificity">
    <text evidence="4">Detected in oocytes, and in embryos at 4 to 120 hours post-fertilization (hpf). Detected along marginal blastomeres at early epiboly stage and throughout the margin at the onset of gastrulation. At 60% epiboly, strongest expression is found in the dorsal shield region and is restricted to the epiblast. Detected in the anterior border of the presomitic mesoderm at the end of epiboly. Detected in adaxial cells, in the somites and in the nervous system during somitogenesis. Detected in diencephalon and hindbrain and in cells surrounding the notochord, including adaxial cells and ventral mesendoderm, in 15-somite stage embryos. At 48 hpf, detected mainly in the brain.</text>
</comment>
<comment type="developmental stage">
    <text evidence="4">Expressed both maternally and zygotically.</text>
</comment>
<comment type="sequence caution" evidence="6">
    <conflict type="erroneous initiation">
        <sequence resource="EMBL-CDS" id="AAH55678"/>
    </conflict>
</comment>
<evidence type="ECO:0000250" key="1"/>
<evidence type="ECO:0000255" key="2">
    <source>
        <dbReference type="PROSITE-ProRule" id="PRU00135"/>
    </source>
</evidence>
<evidence type="ECO:0000255" key="3">
    <source>
        <dbReference type="PROSITE-ProRule" id="PRU00168"/>
    </source>
</evidence>
<evidence type="ECO:0000269" key="4">
    <source>
    </source>
</evidence>
<evidence type="ECO:0000303" key="5">
    <source ref="2"/>
</evidence>
<evidence type="ECO:0000305" key="6"/>
<sequence length="514" mass="59890">MAKFLAELLGCTLPEKGASPMFECRSQPHIGLRHVTKQRDKMPQTPPFPVMYGSTNGYNKNLYKAKEEDYEGLYYHDNNLISGSLEALIEHLVPTVAYYPDRTYIFTFLLSSRLFLHPYELMSKVCHLCVDQQRLSDPQADKARVRKIAPKILQLLTEWTETFPYDFRDERMMKSLKELTHRLSTGEDLYRKAVQQMTQTLIRKLTTLSQYEEALAKINSSVTDRLTVLKTKPQSIQRDILTICNDPFTLAQQLTHIELERLSYIGPEEFVQAFVQKDPLDNDKNCFSDHKKASNLEAYVEWFNRLSYLVATEICMPVKKKHRARVIEFFIDVARECFNIGNFNSLMAIITGMNMSPVSRLKKTWAKVKTAKFDILEHQMDPSSNFYNYRTALRGATQRSITAHSSREKIVIPFFSLLIKDIYFLNEGCANRLPNGHVNFEKFWELAKQVTEFMTWKKVECPFDRDRKILQYLLTAPVFSEDALYLASYESEGPENNMEKDRWKSLRSSLLNRT</sequence>
<accession>Q6DHR3</accession>
<accession>A2AVJ1</accession>
<accession>Q7SXB0</accession>
<reference key="1">
    <citation type="journal article" date="2013" name="Nature">
        <title>The zebrafish reference genome sequence and its relationship to the human genome.</title>
        <authorList>
            <person name="Howe K."/>
            <person name="Clark M.D."/>
            <person name="Torroja C.F."/>
            <person name="Torrance J."/>
            <person name="Berthelot C."/>
            <person name="Muffato M."/>
            <person name="Collins J.E."/>
            <person name="Humphray S."/>
            <person name="McLaren K."/>
            <person name="Matthews L."/>
            <person name="McLaren S."/>
            <person name="Sealy I."/>
            <person name="Caccamo M."/>
            <person name="Churcher C."/>
            <person name="Scott C."/>
            <person name="Barrett J.C."/>
            <person name="Koch R."/>
            <person name="Rauch G.J."/>
            <person name="White S."/>
            <person name="Chow W."/>
            <person name="Kilian B."/>
            <person name="Quintais L.T."/>
            <person name="Guerra-Assuncao J.A."/>
            <person name="Zhou Y."/>
            <person name="Gu Y."/>
            <person name="Yen J."/>
            <person name="Vogel J.H."/>
            <person name="Eyre T."/>
            <person name="Redmond S."/>
            <person name="Banerjee R."/>
            <person name="Chi J."/>
            <person name="Fu B."/>
            <person name="Langley E."/>
            <person name="Maguire S.F."/>
            <person name="Laird G.K."/>
            <person name="Lloyd D."/>
            <person name="Kenyon E."/>
            <person name="Donaldson S."/>
            <person name="Sehra H."/>
            <person name="Almeida-King J."/>
            <person name="Loveland J."/>
            <person name="Trevanion S."/>
            <person name="Jones M."/>
            <person name="Quail M."/>
            <person name="Willey D."/>
            <person name="Hunt A."/>
            <person name="Burton J."/>
            <person name="Sims S."/>
            <person name="McLay K."/>
            <person name="Plumb B."/>
            <person name="Davis J."/>
            <person name="Clee C."/>
            <person name="Oliver K."/>
            <person name="Clark R."/>
            <person name="Riddle C."/>
            <person name="Elliot D."/>
            <person name="Threadgold G."/>
            <person name="Harden G."/>
            <person name="Ware D."/>
            <person name="Begum S."/>
            <person name="Mortimore B."/>
            <person name="Kerry G."/>
            <person name="Heath P."/>
            <person name="Phillimore B."/>
            <person name="Tracey A."/>
            <person name="Corby N."/>
            <person name="Dunn M."/>
            <person name="Johnson C."/>
            <person name="Wood J."/>
            <person name="Clark S."/>
            <person name="Pelan S."/>
            <person name="Griffiths G."/>
            <person name="Smith M."/>
            <person name="Glithero R."/>
            <person name="Howden P."/>
            <person name="Barker N."/>
            <person name="Lloyd C."/>
            <person name="Stevens C."/>
            <person name="Harley J."/>
            <person name="Holt K."/>
            <person name="Panagiotidis G."/>
            <person name="Lovell J."/>
            <person name="Beasley H."/>
            <person name="Henderson C."/>
            <person name="Gordon D."/>
            <person name="Auger K."/>
            <person name="Wright D."/>
            <person name="Collins J."/>
            <person name="Raisen C."/>
            <person name="Dyer L."/>
            <person name="Leung K."/>
            <person name="Robertson L."/>
            <person name="Ambridge K."/>
            <person name="Leongamornlert D."/>
            <person name="McGuire S."/>
            <person name="Gilderthorp R."/>
            <person name="Griffiths C."/>
            <person name="Manthravadi D."/>
            <person name="Nichol S."/>
            <person name="Barker G."/>
            <person name="Whitehead S."/>
            <person name="Kay M."/>
            <person name="Brown J."/>
            <person name="Murnane C."/>
            <person name="Gray E."/>
            <person name="Humphries M."/>
            <person name="Sycamore N."/>
            <person name="Barker D."/>
            <person name="Saunders D."/>
            <person name="Wallis J."/>
            <person name="Babbage A."/>
            <person name="Hammond S."/>
            <person name="Mashreghi-Mohammadi M."/>
            <person name="Barr L."/>
            <person name="Martin S."/>
            <person name="Wray P."/>
            <person name="Ellington A."/>
            <person name="Matthews N."/>
            <person name="Ellwood M."/>
            <person name="Woodmansey R."/>
            <person name="Clark G."/>
            <person name="Cooper J."/>
            <person name="Tromans A."/>
            <person name="Grafham D."/>
            <person name="Skuce C."/>
            <person name="Pandian R."/>
            <person name="Andrews R."/>
            <person name="Harrison E."/>
            <person name="Kimberley A."/>
            <person name="Garnett J."/>
            <person name="Fosker N."/>
            <person name="Hall R."/>
            <person name="Garner P."/>
            <person name="Kelly D."/>
            <person name="Bird C."/>
            <person name="Palmer S."/>
            <person name="Gehring I."/>
            <person name="Berger A."/>
            <person name="Dooley C.M."/>
            <person name="Ersan-Urun Z."/>
            <person name="Eser C."/>
            <person name="Geiger H."/>
            <person name="Geisler M."/>
            <person name="Karotki L."/>
            <person name="Kirn A."/>
            <person name="Konantz J."/>
            <person name="Konantz M."/>
            <person name="Oberlander M."/>
            <person name="Rudolph-Geiger S."/>
            <person name="Teucke M."/>
            <person name="Lanz C."/>
            <person name="Raddatz G."/>
            <person name="Osoegawa K."/>
            <person name="Zhu B."/>
            <person name="Rapp A."/>
            <person name="Widaa S."/>
            <person name="Langford C."/>
            <person name="Yang F."/>
            <person name="Schuster S.C."/>
            <person name="Carter N.P."/>
            <person name="Harrow J."/>
            <person name="Ning Z."/>
            <person name="Herrero J."/>
            <person name="Searle S.M."/>
            <person name="Enright A."/>
            <person name="Geisler R."/>
            <person name="Plasterk R.H."/>
            <person name="Lee C."/>
            <person name="Westerfield M."/>
            <person name="de Jong P.J."/>
            <person name="Zon L.I."/>
            <person name="Postlethwait J.H."/>
            <person name="Nusslein-Volhard C."/>
            <person name="Hubbard T.J."/>
            <person name="Roest Crollius H."/>
            <person name="Rogers J."/>
            <person name="Stemple D.L."/>
        </authorList>
    </citation>
    <scope>NUCLEOTIDE SEQUENCE [LARGE SCALE GENOMIC DNA]</scope>
    <source>
        <strain>Tuebingen</strain>
    </source>
</reference>
<reference key="2">
    <citation type="submission" date="2004-07" db="EMBL/GenBank/DDBJ databases">
        <authorList>
            <consortium name="NIH - Zebrafish Gene Collection (ZGC) project"/>
        </authorList>
    </citation>
    <scope>NUCLEOTIDE SEQUENCE [LARGE SCALE MRNA] (ISOFORMS 1 AND 2)</scope>
    <source>
        <strain>AB</strain>
    </source>
</reference>
<reference key="3">
    <citation type="journal article" date="2007" name="Gene Expr. Patterns">
        <title>Expression of rasgef1b in zebrafish.</title>
        <authorList>
            <person name="Epting D."/>
            <person name="Vorwerk S."/>
            <person name="Hageman A."/>
            <person name="Meyer D."/>
        </authorList>
    </citation>
    <scope>TISSUE SPECIFICITY</scope>
    <scope>DEVELOPMENTAL STAGE</scope>
</reference>
<dbReference type="EMBL" id="AL929533">
    <property type="protein sequence ID" value="CAM15192.1"/>
    <property type="molecule type" value="Genomic_DNA"/>
</dbReference>
<dbReference type="EMBL" id="AL929533">
    <property type="protein sequence ID" value="CAM15193.1"/>
    <property type="molecule type" value="Genomic_DNA"/>
</dbReference>
<dbReference type="EMBL" id="BC055678">
    <property type="protein sequence ID" value="AAH55678.1"/>
    <property type="status" value="ALT_INIT"/>
    <property type="molecule type" value="mRNA"/>
</dbReference>
<dbReference type="EMBL" id="BC075904">
    <property type="protein sequence ID" value="AAH75904.1"/>
    <property type="molecule type" value="mRNA"/>
</dbReference>
<dbReference type="RefSeq" id="NP_001418034.1">
    <molecule id="Q6DHR3-2"/>
    <property type="nucleotide sequence ID" value="NM_001431105.1"/>
</dbReference>
<dbReference type="RefSeq" id="NP_956123.2">
    <molecule id="Q6DHR3-1"/>
    <property type="nucleotide sequence ID" value="NM_199829.2"/>
</dbReference>
<dbReference type="RefSeq" id="XP_005165336.1">
    <property type="nucleotide sequence ID" value="XM_005165279.3"/>
</dbReference>
<dbReference type="RefSeq" id="XP_005165337.1">
    <property type="nucleotide sequence ID" value="XM_005165280.3"/>
</dbReference>
<dbReference type="SMR" id="Q6DHR3"/>
<dbReference type="FunCoup" id="Q6DHR3">
    <property type="interactions" value="721"/>
</dbReference>
<dbReference type="STRING" id="7955.ENSDARP00000116417"/>
<dbReference type="PaxDb" id="7955-ENSDARP00000116417"/>
<dbReference type="Ensembl" id="ENSDART00000137801">
    <molecule id="Q6DHR3-1"/>
    <property type="protein sequence ID" value="ENSDARP00000116417"/>
    <property type="gene ID" value="ENSDARG00000033614"/>
</dbReference>
<dbReference type="Ensembl" id="ENSDART00000189918">
    <molecule id="Q6DHR3-1"/>
    <property type="protein sequence ID" value="ENSDARP00000151188"/>
    <property type="gene ID" value="ENSDARG00000116057"/>
</dbReference>
<dbReference type="GeneID" id="327572"/>
<dbReference type="KEGG" id="dre:327572"/>
<dbReference type="AGR" id="ZFIN:ZDB-GENE-030131-5783"/>
<dbReference type="CTD" id="327572"/>
<dbReference type="ZFIN" id="ZDB-GENE-030131-5783">
    <property type="gene designation" value="rasgef1ba"/>
</dbReference>
<dbReference type="eggNOG" id="KOG3541">
    <property type="taxonomic scope" value="Eukaryota"/>
</dbReference>
<dbReference type="HOGENOM" id="CLU_022907_2_0_1"/>
<dbReference type="InParanoid" id="Q6DHR3"/>
<dbReference type="OMA" id="GHINFQK"/>
<dbReference type="OrthoDB" id="20825at2759"/>
<dbReference type="PhylomeDB" id="Q6DHR3"/>
<dbReference type="TreeFam" id="TF313379"/>
<dbReference type="PRO" id="PR:Q6DHR3"/>
<dbReference type="Proteomes" id="UP000000437">
    <property type="component" value="Alternate scaffold 5"/>
</dbReference>
<dbReference type="Proteomes" id="UP000000437">
    <property type="component" value="Chromosome 5"/>
</dbReference>
<dbReference type="Bgee" id="ENSDARG00000033614">
    <property type="expression patterns" value="Expressed in somite and 27 other cell types or tissues"/>
</dbReference>
<dbReference type="ExpressionAtlas" id="Q6DHR3">
    <property type="expression patterns" value="baseline and differential"/>
</dbReference>
<dbReference type="GO" id="GO:0005886">
    <property type="term" value="C:plasma membrane"/>
    <property type="evidence" value="ECO:0000318"/>
    <property type="project" value="GO_Central"/>
</dbReference>
<dbReference type="GO" id="GO:0005085">
    <property type="term" value="F:guanyl-nucleotide exchange factor activity"/>
    <property type="evidence" value="ECO:0000250"/>
    <property type="project" value="UniProtKB"/>
</dbReference>
<dbReference type="GO" id="GO:0007265">
    <property type="term" value="P:Ras protein signal transduction"/>
    <property type="evidence" value="ECO:0000318"/>
    <property type="project" value="GO_Central"/>
</dbReference>
<dbReference type="CDD" id="cd00155">
    <property type="entry name" value="RasGEF"/>
    <property type="match status" value="1"/>
</dbReference>
<dbReference type="CDD" id="cd06224">
    <property type="entry name" value="REM"/>
    <property type="match status" value="1"/>
</dbReference>
<dbReference type="FunFam" id="1.10.840.10:FF:000008">
    <property type="entry name" value="Ras-GEF domain-containing family member 1B"/>
    <property type="match status" value="1"/>
</dbReference>
<dbReference type="FunFam" id="1.20.870.10:FF:000007">
    <property type="entry name" value="Ras-GEF domain-containing family member 1B"/>
    <property type="match status" value="1"/>
</dbReference>
<dbReference type="Gene3D" id="1.10.840.10">
    <property type="entry name" value="Ras guanine-nucleotide exchange factors catalytic domain"/>
    <property type="match status" value="1"/>
</dbReference>
<dbReference type="Gene3D" id="1.20.870.10">
    <property type="entry name" value="Son of sevenless (SoS) protein Chain: S domain 1"/>
    <property type="match status" value="1"/>
</dbReference>
<dbReference type="InterPro" id="IPR008937">
    <property type="entry name" value="Ras-like_GEF"/>
</dbReference>
<dbReference type="InterPro" id="IPR000651">
    <property type="entry name" value="Ras-like_Gua-exchang_fac_N"/>
</dbReference>
<dbReference type="InterPro" id="IPR019804">
    <property type="entry name" value="Ras_G-nucl-exch_fac_CS"/>
</dbReference>
<dbReference type="InterPro" id="IPR023578">
    <property type="entry name" value="Ras_GEF_dom_sf"/>
</dbReference>
<dbReference type="InterPro" id="IPR001895">
    <property type="entry name" value="RASGEF_cat_dom"/>
</dbReference>
<dbReference type="InterPro" id="IPR036964">
    <property type="entry name" value="RASGEF_cat_dom_sf"/>
</dbReference>
<dbReference type="PANTHER" id="PTHR23113">
    <property type="entry name" value="GUANINE NUCLEOTIDE EXCHANGE FACTOR"/>
    <property type="match status" value="1"/>
</dbReference>
<dbReference type="PANTHER" id="PTHR23113:SF197">
    <property type="entry name" value="RAS-GEF DOMAIN-CONTAINING FAMILY MEMBER 1B"/>
    <property type="match status" value="1"/>
</dbReference>
<dbReference type="Pfam" id="PF00617">
    <property type="entry name" value="RasGEF"/>
    <property type="match status" value="1"/>
</dbReference>
<dbReference type="Pfam" id="PF00618">
    <property type="entry name" value="RasGEF_N"/>
    <property type="match status" value="1"/>
</dbReference>
<dbReference type="SMART" id="SM00147">
    <property type="entry name" value="RasGEF"/>
    <property type="match status" value="1"/>
</dbReference>
<dbReference type="SMART" id="SM00229">
    <property type="entry name" value="RasGEFN"/>
    <property type="match status" value="1"/>
</dbReference>
<dbReference type="SUPFAM" id="SSF48366">
    <property type="entry name" value="Ras GEF"/>
    <property type="match status" value="1"/>
</dbReference>
<dbReference type="PROSITE" id="PS00720">
    <property type="entry name" value="RASGEF"/>
    <property type="match status" value="1"/>
</dbReference>
<dbReference type="PROSITE" id="PS50009">
    <property type="entry name" value="RASGEF_CAT"/>
    <property type="match status" value="1"/>
</dbReference>
<dbReference type="PROSITE" id="PS50212">
    <property type="entry name" value="RASGEF_NTER"/>
    <property type="match status" value="1"/>
</dbReference>
<name>RG1BA_DANRE</name>